<dbReference type="EMBL" id="U44827">
    <property type="protein sequence ID" value="AAC44225.1"/>
    <property type="status" value="ALT_INIT"/>
    <property type="molecule type" value="Genomic_DNA"/>
</dbReference>
<dbReference type="SMR" id="P0C1F6"/>
<dbReference type="eggNOG" id="COG2332">
    <property type="taxonomic scope" value="Bacteria"/>
</dbReference>
<dbReference type="GO" id="GO:0005886">
    <property type="term" value="C:plasma membrane"/>
    <property type="evidence" value="ECO:0007669"/>
    <property type="project" value="UniProtKB-SubCell"/>
</dbReference>
<dbReference type="GO" id="GO:0020037">
    <property type="term" value="F:heme binding"/>
    <property type="evidence" value="ECO:0007669"/>
    <property type="project" value="InterPro"/>
</dbReference>
<dbReference type="GO" id="GO:0046872">
    <property type="term" value="F:metal ion binding"/>
    <property type="evidence" value="ECO:0007669"/>
    <property type="project" value="UniProtKB-KW"/>
</dbReference>
<dbReference type="GO" id="GO:0017004">
    <property type="term" value="P:cytochrome complex assembly"/>
    <property type="evidence" value="ECO:0007669"/>
    <property type="project" value="UniProtKB-KW"/>
</dbReference>
<dbReference type="FunFam" id="2.40.50.140:FF:000104">
    <property type="entry name" value="Cytochrome c-type biogenesis protein CcmE"/>
    <property type="match status" value="1"/>
</dbReference>
<dbReference type="Gene3D" id="2.40.50.140">
    <property type="entry name" value="Nucleic acid-binding proteins"/>
    <property type="match status" value="1"/>
</dbReference>
<dbReference type="HAMAP" id="MF_01959">
    <property type="entry name" value="CcmE"/>
    <property type="match status" value="1"/>
</dbReference>
<dbReference type="InterPro" id="IPR004329">
    <property type="entry name" value="CcmE"/>
</dbReference>
<dbReference type="InterPro" id="IPR036127">
    <property type="entry name" value="CcmE-like_sf"/>
</dbReference>
<dbReference type="InterPro" id="IPR012340">
    <property type="entry name" value="NA-bd_OB-fold"/>
</dbReference>
<dbReference type="NCBIfam" id="NF009727">
    <property type="entry name" value="PRK13254.1-1"/>
    <property type="match status" value="1"/>
</dbReference>
<dbReference type="NCBIfam" id="NF009729">
    <property type="entry name" value="PRK13254.1-3"/>
    <property type="match status" value="1"/>
</dbReference>
<dbReference type="NCBIfam" id="NF009731">
    <property type="entry name" value="PRK13254.1-5"/>
    <property type="match status" value="1"/>
</dbReference>
<dbReference type="PANTHER" id="PTHR34128">
    <property type="entry name" value="CYTOCHROME C-TYPE BIOGENESIS PROTEIN CCME HOMOLOG, MITOCHONDRIAL"/>
    <property type="match status" value="1"/>
</dbReference>
<dbReference type="PANTHER" id="PTHR34128:SF2">
    <property type="entry name" value="CYTOCHROME C-TYPE BIOGENESIS PROTEIN CCME HOMOLOG, MITOCHONDRIAL"/>
    <property type="match status" value="1"/>
</dbReference>
<dbReference type="Pfam" id="PF03100">
    <property type="entry name" value="CcmE"/>
    <property type="match status" value="1"/>
</dbReference>
<dbReference type="SUPFAM" id="SSF82093">
    <property type="entry name" value="Heme chaperone CcmE"/>
    <property type="match status" value="1"/>
</dbReference>
<keyword id="KW-0997">Cell inner membrane</keyword>
<keyword id="KW-1003">Cell membrane</keyword>
<keyword id="KW-0201">Cytochrome c-type biogenesis</keyword>
<keyword id="KW-0349">Heme</keyword>
<keyword id="KW-0408">Iron</keyword>
<keyword id="KW-0472">Membrane</keyword>
<keyword id="KW-0479">Metal-binding</keyword>
<keyword id="KW-0735">Signal-anchor</keyword>
<keyword id="KW-0812">Transmembrane</keyword>
<keyword id="KW-1133">Transmembrane helix</keyword>
<reference key="1">
    <citation type="journal article" date="1996" name="Proc. Natl. Acad. Sci. U.S.A.">
        <title>A chromosomal locus required for copper resistance, competitive fitness, and cytochrome c biogenesis in Pseudomonas fluorescens.</title>
        <authorList>
            <person name="Yang C.-H."/>
            <person name="Azad H.R."/>
            <person name="Cooksey D.A."/>
        </authorList>
    </citation>
    <scope>NUCLEOTIDE SEQUENCE [GENOMIC DNA]</scope>
    <source>
        <strain>09906</strain>
    </source>
</reference>
<evidence type="ECO:0000255" key="1">
    <source>
        <dbReference type="HAMAP-Rule" id="MF_01959"/>
    </source>
</evidence>
<evidence type="ECO:0000305" key="2"/>
<evidence type="ECO:0000305" key="3">
    <source>
    </source>
</evidence>
<feature type="chain" id="PRO_0000201581" description="Cytochrome c-type biogenesis protein CcmE">
    <location>
        <begin position="1"/>
        <end position="156"/>
    </location>
</feature>
<feature type="topological domain" description="Cytoplasmic" evidence="1">
    <location>
        <begin position="1"/>
        <end position="8"/>
    </location>
</feature>
<feature type="transmembrane region" description="Helical; Signal-anchor for type II membrane protein" evidence="1">
    <location>
        <begin position="9"/>
        <end position="29"/>
    </location>
</feature>
<feature type="topological domain" description="Periplasmic" evidence="1">
    <location>
        <begin position="30"/>
        <end position="156"/>
    </location>
</feature>
<feature type="binding site" description="covalent" evidence="1">
    <location>
        <position position="124"/>
    </location>
    <ligand>
        <name>heme</name>
        <dbReference type="ChEBI" id="CHEBI:30413"/>
    </ligand>
</feature>
<feature type="binding site" description="axial binding residue" evidence="1">
    <location>
        <position position="128"/>
    </location>
    <ligand>
        <name>heme</name>
        <dbReference type="ChEBI" id="CHEBI:30413"/>
    </ligand>
    <ligandPart>
        <name>Fe</name>
        <dbReference type="ChEBI" id="CHEBI:18248"/>
    </ligandPart>
</feature>
<protein>
    <recommendedName>
        <fullName evidence="1">Cytochrome c-type biogenesis protein CcmE</fullName>
    </recommendedName>
    <alternativeName>
        <fullName evidence="1">Cytochrome c maturation protein E</fullName>
    </alternativeName>
    <alternativeName>
        <fullName evidence="1">Heme chaperone CcmE</fullName>
    </alternativeName>
</protein>
<comment type="function">
    <text evidence="1">Heme chaperone required for the biogenesis of c-type cytochromes. Transiently binds heme delivered by CcmC and transfers the heme to apo-cytochromes in a process facilitated by CcmF and CcmH.</text>
</comment>
<comment type="subcellular location">
    <subcellularLocation>
        <location evidence="1">Cell inner membrane</location>
        <topology evidence="1">Single-pass type II membrane protein</topology>
        <orientation evidence="1">Periplasmic side</orientation>
    </subcellularLocation>
</comment>
<comment type="similarity">
    <text evidence="1">Belongs to the CcmE/CycJ family.</text>
</comment>
<comment type="caution">
    <text evidence="3">Was originally proposed to be fused with ccmD.</text>
</comment>
<comment type="sequence caution" evidence="2">
    <conflict type="erroneous initiation">
        <sequence resource="EMBL-CDS" id="AAC44225"/>
    </conflict>
</comment>
<proteinExistence type="inferred from homology"/>
<organism>
    <name type="scientific">Pseudomonas fluorescens</name>
    <dbReference type="NCBI Taxonomy" id="294"/>
    <lineage>
        <taxon>Bacteria</taxon>
        <taxon>Pseudomonadati</taxon>
        <taxon>Pseudomonadota</taxon>
        <taxon>Gammaproteobacteria</taxon>
        <taxon>Pseudomonadales</taxon>
        <taxon>Pseudomonadaceae</taxon>
        <taxon>Pseudomonas</taxon>
    </lineage>
</organism>
<gene>
    <name evidence="1" type="primary">ccmE</name>
    <name evidence="1" type="synonym">cycJ</name>
</gene>
<name>CCME_PSEFL</name>
<accession>P0C1F6</accession>
<accession>P52224</accession>
<sequence>MNPLRRKRLLIILAILAGVGIAVGLAMSALRENINLFYTPTQIANGEAPLDTRIRAGGMVEQGSLKRSGDSLDVTFVVTDFNKAVTITYRGILPDLFREGQGIVALGKLNADAVVVADEVLAKHDEKYMPPEVTKALKDSGQSRLARIRSLPRRAK</sequence>